<name>SNU13_YARLI</name>
<reference key="1">
    <citation type="journal article" date="2004" name="Nature">
        <title>Genome evolution in yeasts.</title>
        <authorList>
            <person name="Dujon B."/>
            <person name="Sherman D."/>
            <person name="Fischer G."/>
            <person name="Durrens P."/>
            <person name="Casaregola S."/>
            <person name="Lafontaine I."/>
            <person name="de Montigny J."/>
            <person name="Marck C."/>
            <person name="Neuveglise C."/>
            <person name="Talla E."/>
            <person name="Goffard N."/>
            <person name="Frangeul L."/>
            <person name="Aigle M."/>
            <person name="Anthouard V."/>
            <person name="Babour A."/>
            <person name="Barbe V."/>
            <person name="Barnay S."/>
            <person name="Blanchin S."/>
            <person name="Beckerich J.-M."/>
            <person name="Beyne E."/>
            <person name="Bleykasten C."/>
            <person name="Boisrame A."/>
            <person name="Boyer J."/>
            <person name="Cattolico L."/>
            <person name="Confanioleri F."/>
            <person name="de Daruvar A."/>
            <person name="Despons L."/>
            <person name="Fabre E."/>
            <person name="Fairhead C."/>
            <person name="Ferry-Dumazet H."/>
            <person name="Groppi A."/>
            <person name="Hantraye F."/>
            <person name="Hennequin C."/>
            <person name="Jauniaux N."/>
            <person name="Joyet P."/>
            <person name="Kachouri R."/>
            <person name="Kerrest A."/>
            <person name="Koszul R."/>
            <person name="Lemaire M."/>
            <person name="Lesur I."/>
            <person name="Ma L."/>
            <person name="Muller H."/>
            <person name="Nicaud J.-M."/>
            <person name="Nikolski M."/>
            <person name="Oztas S."/>
            <person name="Ozier-Kalogeropoulos O."/>
            <person name="Pellenz S."/>
            <person name="Potier S."/>
            <person name="Richard G.-F."/>
            <person name="Straub M.-L."/>
            <person name="Suleau A."/>
            <person name="Swennen D."/>
            <person name="Tekaia F."/>
            <person name="Wesolowski-Louvel M."/>
            <person name="Westhof E."/>
            <person name="Wirth B."/>
            <person name="Zeniou-Meyer M."/>
            <person name="Zivanovic Y."/>
            <person name="Bolotin-Fukuhara M."/>
            <person name="Thierry A."/>
            <person name="Bouchier C."/>
            <person name="Caudron B."/>
            <person name="Scarpelli C."/>
            <person name="Gaillardin C."/>
            <person name="Weissenbach J."/>
            <person name="Wincker P."/>
            <person name="Souciet J.-L."/>
        </authorList>
    </citation>
    <scope>NUCLEOTIDE SEQUENCE [LARGE SCALE GENOMIC DNA]</scope>
    <source>
        <strain>CLIB 122 / E 150</strain>
    </source>
</reference>
<keyword id="KW-0507">mRNA processing</keyword>
<keyword id="KW-0508">mRNA splicing</keyword>
<keyword id="KW-0539">Nucleus</keyword>
<keyword id="KW-1185">Reference proteome</keyword>
<keyword id="KW-0687">Ribonucleoprotein</keyword>
<keyword id="KW-0690">Ribosome biogenesis</keyword>
<keyword id="KW-0694">RNA-binding</keyword>
<keyword id="KW-0698">rRNA processing</keyword>
<keyword id="KW-0747">Spliceosome</keyword>
<sequence>MSEPNPKAFPLADAALTQQILDIVQQATHLRQLKKGANEATKTLNRGISEFIIMAADAEPIEILLHLPLLCEDKNVPYIFVPSKVALGRACGVSRPVISASVTSNDASQLKDQIIQMKDKIERLLI</sequence>
<proteinExistence type="inferred from homology"/>
<feature type="chain" id="PRO_0000290664" description="13 kDa ribonucleoprotein-associated protein">
    <location>
        <begin position="1"/>
        <end position="126"/>
    </location>
</feature>
<accession>Q6C0I0</accession>
<organism>
    <name type="scientific">Yarrowia lipolytica (strain CLIB 122 / E 150)</name>
    <name type="common">Yeast</name>
    <name type="synonym">Candida lipolytica</name>
    <dbReference type="NCBI Taxonomy" id="284591"/>
    <lineage>
        <taxon>Eukaryota</taxon>
        <taxon>Fungi</taxon>
        <taxon>Dikarya</taxon>
        <taxon>Ascomycota</taxon>
        <taxon>Saccharomycotina</taxon>
        <taxon>Dipodascomycetes</taxon>
        <taxon>Dipodascales</taxon>
        <taxon>Dipodascales incertae sedis</taxon>
        <taxon>Yarrowia</taxon>
    </lineage>
</organism>
<dbReference type="EMBL" id="CR382132">
    <property type="protein sequence ID" value="CAG78643.1"/>
    <property type="molecule type" value="Genomic_DNA"/>
</dbReference>
<dbReference type="RefSeq" id="XP_505832.1">
    <property type="nucleotide sequence ID" value="XM_505832.1"/>
</dbReference>
<dbReference type="SMR" id="Q6C0I0"/>
<dbReference type="FunCoup" id="Q6C0I0">
    <property type="interactions" value="1318"/>
</dbReference>
<dbReference type="STRING" id="284591.Q6C0I0"/>
<dbReference type="EnsemblFungi" id="CAG78643">
    <property type="protein sequence ID" value="CAG78643"/>
    <property type="gene ID" value="YALI0_F24497g"/>
</dbReference>
<dbReference type="KEGG" id="yli:2908708"/>
<dbReference type="VEuPathDB" id="FungiDB:YALI0_F24497g"/>
<dbReference type="HOGENOM" id="CLU_084513_4_1_1"/>
<dbReference type="InParanoid" id="Q6C0I0"/>
<dbReference type="OMA" id="IKNQIYA"/>
<dbReference type="OrthoDB" id="112619at4891"/>
<dbReference type="Proteomes" id="UP000001300">
    <property type="component" value="Chromosome F"/>
</dbReference>
<dbReference type="GO" id="GO:0031428">
    <property type="term" value="C:box C/D methylation guide snoRNP complex"/>
    <property type="evidence" value="ECO:0000318"/>
    <property type="project" value="GO_Central"/>
</dbReference>
<dbReference type="GO" id="GO:0005730">
    <property type="term" value="C:nucleolus"/>
    <property type="evidence" value="ECO:0000318"/>
    <property type="project" value="GO_Central"/>
</dbReference>
<dbReference type="GO" id="GO:0071011">
    <property type="term" value="C:precatalytic spliceosome"/>
    <property type="evidence" value="ECO:0000318"/>
    <property type="project" value="GO_Central"/>
</dbReference>
<dbReference type="GO" id="GO:0032040">
    <property type="term" value="C:small-subunit processome"/>
    <property type="evidence" value="ECO:0000318"/>
    <property type="project" value="GO_Central"/>
</dbReference>
<dbReference type="GO" id="GO:0046540">
    <property type="term" value="C:U4/U6 x U5 tri-snRNP complex"/>
    <property type="evidence" value="ECO:0000318"/>
    <property type="project" value="GO_Central"/>
</dbReference>
<dbReference type="GO" id="GO:0003723">
    <property type="term" value="F:RNA binding"/>
    <property type="evidence" value="ECO:0000318"/>
    <property type="project" value="GO_Central"/>
</dbReference>
<dbReference type="GO" id="GO:0034511">
    <property type="term" value="F:U3 snoRNA binding"/>
    <property type="evidence" value="ECO:0007669"/>
    <property type="project" value="EnsemblFungi"/>
</dbReference>
<dbReference type="GO" id="GO:0030621">
    <property type="term" value="F:U4 snRNA binding"/>
    <property type="evidence" value="ECO:0007669"/>
    <property type="project" value="EnsemblFungi"/>
</dbReference>
<dbReference type="GO" id="GO:0000494">
    <property type="term" value="P:box C/D sno(s)RNA 3'-end processing"/>
    <property type="evidence" value="ECO:0007669"/>
    <property type="project" value="EnsemblFungi"/>
</dbReference>
<dbReference type="GO" id="GO:0030490">
    <property type="term" value="P:maturation of SSU-rRNA"/>
    <property type="evidence" value="ECO:0000318"/>
    <property type="project" value="GO_Central"/>
</dbReference>
<dbReference type="GO" id="GO:0000462">
    <property type="term" value="P:maturation of SSU-rRNA from tricistronic rRNA transcript (SSU-rRNA, 5.8S rRNA, LSU-rRNA)"/>
    <property type="evidence" value="ECO:0007669"/>
    <property type="project" value="EnsemblFungi"/>
</dbReference>
<dbReference type="GO" id="GO:0000398">
    <property type="term" value="P:mRNA splicing, via spliceosome"/>
    <property type="evidence" value="ECO:0000318"/>
    <property type="project" value="GO_Central"/>
</dbReference>
<dbReference type="GO" id="GO:0000452">
    <property type="term" value="P:snoRNA guided rRNA 2'-O-methylation"/>
    <property type="evidence" value="ECO:0007669"/>
    <property type="project" value="EnsemblFungi"/>
</dbReference>
<dbReference type="CDD" id="cd21104">
    <property type="entry name" value="SNU13"/>
    <property type="match status" value="1"/>
</dbReference>
<dbReference type="FunFam" id="3.30.1330.30:FF:000002">
    <property type="entry name" value="NHP2-like protein 1 homolog"/>
    <property type="match status" value="1"/>
</dbReference>
<dbReference type="Gene3D" id="3.30.1330.30">
    <property type="match status" value="1"/>
</dbReference>
<dbReference type="InterPro" id="IPR050257">
    <property type="entry name" value="eL8/uL1-like"/>
</dbReference>
<dbReference type="InterPro" id="IPR002415">
    <property type="entry name" value="H/ACA_rnp_Nhp2-like"/>
</dbReference>
<dbReference type="InterPro" id="IPR029064">
    <property type="entry name" value="Ribosomal_eL30-like_sf"/>
</dbReference>
<dbReference type="InterPro" id="IPR004037">
    <property type="entry name" value="Ribosomal_eL8-like_CS"/>
</dbReference>
<dbReference type="InterPro" id="IPR004038">
    <property type="entry name" value="Ribosomal_eL8/eL30/eS12/Gad45"/>
</dbReference>
<dbReference type="InterPro" id="IPR018492">
    <property type="entry name" value="Ribosomal_eL8/Nhp2"/>
</dbReference>
<dbReference type="PANTHER" id="PTHR23105">
    <property type="entry name" value="RIBOSOMAL PROTEIN L7AE FAMILY MEMBER"/>
    <property type="match status" value="1"/>
</dbReference>
<dbReference type="Pfam" id="PF01248">
    <property type="entry name" value="Ribosomal_L7Ae"/>
    <property type="match status" value="1"/>
</dbReference>
<dbReference type="PRINTS" id="PR00881">
    <property type="entry name" value="L7ARS6FAMILY"/>
</dbReference>
<dbReference type="PRINTS" id="PR00883">
    <property type="entry name" value="NUCLEARHMG"/>
</dbReference>
<dbReference type="SUPFAM" id="SSF55315">
    <property type="entry name" value="L30e-like"/>
    <property type="match status" value="1"/>
</dbReference>
<dbReference type="PROSITE" id="PS01082">
    <property type="entry name" value="RIBOSOMAL_L7AE"/>
    <property type="match status" value="1"/>
</dbReference>
<evidence type="ECO:0000250" key="1"/>
<evidence type="ECO:0000305" key="2"/>
<protein>
    <recommendedName>
        <fullName>13 kDa ribonucleoprotein-associated protein</fullName>
    </recommendedName>
</protein>
<gene>
    <name type="primary">SNU13</name>
    <name type="ordered locus">YALI0F24497g</name>
</gene>
<comment type="function">
    <text evidence="1">Common component of the spliceosome and rRNA processing machinery. In association with the spliceosomal U4/U6.U5 tri-snRNP particle, required for splicing of pre-mRNA. In association with box C/D snoRNPs, required for processing of pre-ribosomal RNA (rRNA) and site-specific 2'-O-methylation of substrate RNAs. Essential for the accumulation and stability of U4 snRNA, U6 snRNA, and box C/D snoRNAs (By similarity).</text>
</comment>
<comment type="subunit">
    <text evidence="1">Component of the U3 snoRNP particle. Binds to the C'/D and B/C motifs in U3 snoRNA. Component of the 25S U4/U6.U5 tri-snRNP particle, a subcomplex of the spliceosome. Binds to the 5' stem-loop of U4 snRNA (By similarity).</text>
</comment>
<comment type="subcellular location">
    <subcellularLocation>
        <location evidence="1">Nucleus</location>
        <location evidence="1">Nucleolus</location>
    </subcellularLocation>
</comment>
<comment type="similarity">
    <text evidence="2">Belongs to the eukaryotic ribosomal protein eL8 family.</text>
</comment>